<protein>
    <recommendedName>
        <fullName evidence="1">NADH-quinone oxidoreductase subunit D</fullName>
        <ecNumber evidence="1">7.1.1.-</ecNumber>
    </recommendedName>
    <alternativeName>
        <fullName evidence="1">NADH dehydrogenase I subunit D</fullName>
    </alternativeName>
    <alternativeName>
        <fullName evidence="1">NDH-1 subunit D</fullName>
    </alternativeName>
</protein>
<evidence type="ECO:0000255" key="1">
    <source>
        <dbReference type="HAMAP-Rule" id="MF_01358"/>
    </source>
</evidence>
<sequence length="396" mass="44967">MTEHNIRNFAINFGPQHPAAHGVLRLVLELDGEVVERVDPHIGLLHRGTEKLIEYKTYLQATPYFDRLDYVSPMNQEHAFCLAIEKLAGIEVPRRAQLIRVLFCEIGRLLSHLLNVTTQAMDVGALTPPLWGFEEREKLMIFYERASGARLHANYFRPGGVHQDLPPKLIDDIDAFCDPFLQVVQDLDDLVMANRIFKQRNVDIGIVSVDEAMQWGFSGVMVRGSGIPWDLRKAQPYECYEEMEFDVPVGKNGDTYDRQVIRMEEMRQSVRIMKQCVAKLREPAGQGPIASVDGKFAPPPRREMKRSMEALIHHFKLYTEGFHVPEGEVYAAVEAPKGEFGVYLVSDGTNKPYRCKIRAPGFAHLQAMDWMCRGHLLADVSCVLGTLDIVFGEVDR</sequence>
<feature type="chain" id="PRO_0000357850" description="NADH-quinone oxidoreductase subunit D">
    <location>
        <begin position="1"/>
        <end position="396"/>
    </location>
</feature>
<name>NUOD_METRJ</name>
<keyword id="KW-0997">Cell inner membrane</keyword>
<keyword id="KW-1003">Cell membrane</keyword>
<keyword id="KW-0472">Membrane</keyword>
<keyword id="KW-0520">NAD</keyword>
<keyword id="KW-0874">Quinone</keyword>
<keyword id="KW-1278">Translocase</keyword>
<keyword id="KW-0813">Transport</keyword>
<keyword id="KW-0830">Ubiquinone</keyword>
<reference key="1">
    <citation type="submission" date="2008-03" db="EMBL/GenBank/DDBJ databases">
        <title>Complete sequence of chromosome of Methylobacterium radiotolerans JCM 2831.</title>
        <authorList>
            <consortium name="US DOE Joint Genome Institute"/>
            <person name="Copeland A."/>
            <person name="Lucas S."/>
            <person name="Lapidus A."/>
            <person name="Glavina del Rio T."/>
            <person name="Dalin E."/>
            <person name="Tice H."/>
            <person name="Bruce D."/>
            <person name="Goodwin L."/>
            <person name="Pitluck S."/>
            <person name="Kiss H."/>
            <person name="Brettin T."/>
            <person name="Detter J.C."/>
            <person name="Han C."/>
            <person name="Kuske C.R."/>
            <person name="Schmutz J."/>
            <person name="Larimer F."/>
            <person name="Land M."/>
            <person name="Hauser L."/>
            <person name="Kyrpides N."/>
            <person name="Mikhailova N."/>
            <person name="Marx C.J."/>
            <person name="Richardson P."/>
        </authorList>
    </citation>
    <scope>NUCLEOTIDE SEQUENCE [LARGE SCALE GENOMIC DNA]</scope>
    <source>
        <strain>ATCC 27329 / DSM 1819 / JCM 2831 / NBRC 15690 / NCIMB 10815 / 0-1</strain>
    </source>
</reference>
<dbReference type="EC" id="7.1.1.-" evidence="1"/>
<dbReference type="EMBL" id="CP001001">
    <property type="protein sequence ID" value="ACB24052.1"/>
    <property type="molecule type" value="Genomic_DNA"/>
</dbReference>
<dbReference type="RefSeq" id="WP_012319034.1">
    <property type="nucleotide sequence ID" value="NC_010505.1"/>
</dbReference>
<dbReference type="SMR" id="B1LUN4"/>
<dbReference type="STRING" id="426355.Mrad2831_2057"/>
<dbReference type="GeneID" id="6138086"/>
<dbReference type="KEGG" id="mrd:Mrad2831_2057"/>
<dbReference type="eggNOG" id="COG0649">
    <property type="taxonomic scope" value="Bacteria"/>
</dbReference>
<dbReference type="HOGENOM" id="CLU_015134_1_1_5"/>
<dbReference type="OrthoDB" id="9801496at2"/>
<dbReference type="Proteomes" id="UP000006589">
    <property type="component" value="Chromosome"/>
</dbReference>
<dbReference type="GO" id="GO:0005886">
    <property type="term" value="C:plasma membrane"/>
    <property type="evidence" value="ECO:0007669"/>
    <property type="project" value="UniProtKB-SubCell"/>
</dbReference>
<dbReference type="GO" id="GO:0051287">
    <property type="term" value="F:NAD binding"/>
    <property type="evidence" value="ECO:0007669"/>
    <property type="project" value="InterPro"/>
</dbReference>
<dbReference type="GO" id="GO:0050136">
    <property type="term" value="F:NADH:ubiquinone reductase (non-electrogenic) activity"/>
    <property type="evidence" value="ECO:0007669"/>
    <property type="project" value="UniProtKB-UniRule"/>
</dbReference>
<dbReference type="GO" id="GO:0048038">
    <property type="term" value="F:quinone binding"/>
    <property type="evidence" value="ECO:0007669"/>
    <property type="project" value="UniProtKB-KW"/>
</dbReference>
<dbReference type="FunFam" id="1.10.645.10:FF:000005">
    <property type="entry name" value="NADH-quinone oxidoreductase subunit D"/>
    <property type="match status" value="1"/>
</dbReference>
<dbReference type="Gene3D" id="1.10.645.10">
    <property type="entry name" value="Cytochrome-c3 Hydrogenase, chain B"/>
    <property type="match status" value="1"/>
</dbReference>
<dbReference type="HAMAP" id="MF_01358">
    <property type="entry name" value="NDH1_NuoD"/>
    <property type="match status" value="1"/>
</dbReference>
<dbReference type="InterPro" id="IPR001135">
    <property type="entry name" value="NADH_Q_OxRdtase_suD"/>
</dbReference>
<dbReference type="InterPro" id="IPR014029">
    <property type="entry name" value="NADH_UbQ_OxRdtase_49kDa_CS"/>
</dbReference>
<dbReference type="InterPro" id="IPR022885">
    <property type="entry name" value="NDH1_su_D/H"/>
</dbReference>
<dbReference type="InterPro" id="IPR029014">
    <property type="entry name" value="NiFe-Hase_large"/>
</dbReference>
<dbReference type="NCBIfam" id="TIGR01962">
    <property type="entry name" value="NuoD"/>
    <property type="match status" value="1"/>
</dbReference>
<dbReference type="NCBIfam" id="NF004739">
    <property type="entry name" value="PRK06075.1"/>
    <property type="match status" value="1"/>
</dbReference>
<dbReference type="PANTHER" id="PTHR11993:SF10">
    <property type="entry name" value="NADH DEHYDROGENASE [UBIQUINONE] IRON-SULFUR PROTEIN 2, MITOCHONDRIAL"/>
    <property type="match status" value="1"/>
</dbReference>
<dbReference type="PANTHER" id="PTHR11993">
    <property type="entry name" value="NADH-UBIQUINONE OXIDOREDUCTASE 49 KDA SUBUNIT"/>
    <property type="match status" value="1"/>
</dbReference>
<dbReference type="Pfam" id="PF00346">
    <property type="entry name" value="Complex1_49kDa"/>
    <property type="match status" value="1"/>
</dbReference>
<dbReference type="SUPFAM" id="SSF56762">
    <property type="entry name" value="HydB/Nqo4-like"/>
    <property type="match status" value="1"/>
</dbReference>
<dbReference type="PROSITE" id="PS00535">
    <property type="entry name" value="COMPLEX1_49K"/>
    <property type="match status" value="1"/>
</dbReference>
<proteinExistence type="inferred from homology"/>
<accession>B1LUN4</accession>
<comment type="function">
    <text evidence="1">NDH-1 shuttles electrons from NADH, via FMN and iron-sulfur (Fe-S) centers, to quinones in the respiratory chain. The immediate electron acceptor for the enzyme in this species is believed to be ubiquinone. Couples the redox reaction to proton translocation (for every two electrons transferred, four hydrogen ions are translocated across the cytoplasmic membrane), and thus conserves the redox energy in a proton gradient.</text>
</comment>
<comment type="catalytic activity">
    <reaction evidence="1">
        <text>a quinone + NADH + 5 H(+)(in) = a quinol + NAD(+) + 4 H(+)(out)</text>
        <dbReference type="Rhea" id="RHEA:57888"/>
        <dbReference type="ChEBI" id="CHEBI:15378"/>
        <dbReference type="ChEBI" id="CHEBI:24646"/>
        <dbReference type="ChEBI" id="CHEBI:57540"/>
        <dbReference type="ChEBI" id="CHEBI:57945"/>
        <dbReference type="ChEBI" id="CHEBI:132124"/>
    </reaction>
</comment>
<comment type="subunit">
    <text evidence="1">NDH-1 is composed of 14 different subunits. Subunits NuoB, C, D, E, F, and G constitute the peripheral sector of the complex.</text>
</comment>
<comment type="subcellular location">
    <subcellularLocation>
        <location evidence="1">Cell inner membrane</location>
        <topology evidence="1">Peripheral membrane protein</topology>
        <orientation evidence="1">Cytoplasmic side</orientation>
    </subcellularLocation>
</comment>
<comment type="similarity">
    <text evidence="1">Belongs to the complex I 49 kDa subunit family.</text>
</comment>
<organism>
    <name type="scientific">Methylobacterium radiotolerans (strain ATCC 27329 / DSM 1819 / JCM 2831 / NBRC 15690 / NCIMB 10815 / 0-1)</name>
    <dbReference type="NCBI Taxonomy" id="426355"/>
    <lineage>
        <taxon>Bacteria</taxon>
        <taxon>Pseudomonadati</taxon>
        <taxon>Pseudomonadota</taxon>
        <taxon>Alphaproteobacteria</taxon>
        <taxon>Hyphomicrobiales</taxon>
        <taxon>Methylobacteriaceae</taxon>
        <taxon>Methylobacterium</taxon>
    </lineage>
</organism>
<gene>
    <name evidence="1" type="primary">nuoD</name>
    <name type="ordered locus">Mrad2831_2057</name>
</gene>